<dbReference type="EC" id="7.1.1.2" evidence="1"/>
<dbReference type="EMBL" id="X61145">
    <property type="protein sequence ID" value="CAA43448.1"/>
    <property type="molecule type" value="Genomic_DNA"/>
</dbReference>
<dbReference type="PIR" id="B58851">
    <property type="entry name" value="B58851"/>
</dbReference>
<dbReference type="RefSeq" id="NP_006898.1">
    <property type="nucleotide sequence ID" value="NC_001321.1"/>
</dbReference>
<dbReference type="SMR" id="P24975"/>
<dbReference type="GeneID" id="807616"/>
<dbReference type="CTD" id="4538"/>
<dbReference type="GO" id="GO:0005743">
    <property type="term" value="C:mitochondrial inner membrane"/>
    <property type="evidence" value="ECO:0000250"/>
    <property type="project" value="UniProtKB"/>
</dbReference>
<dbReference type="GO" id="GO:0008137">
    <property type="term" value="F:NADH dehydrogenase (ubiquinone) activity"/>
    <property type="evidence" value="ECO:0000250"/>
    <property type="project" value="UniProtKB"/>
</dbReference>
<dbReference type="GO" id="GO:0048039">
    <property type="term" value="F:ubiquinone binding"/>
    <property type="evidence" value="ECO:0007669"/>
    <property type="project" value="TreeGrafter"/>
</dbReference>
<dbReference type="GO" id="GO:0015990">
    <property type="term" value="P:electron transport coupled proton transport"/>
    <property type="evidence" value="ECO:0007669"/>
    <property type="project" value="TreeGrafter"/>
</dbReference>
<dbReference type="GO" id="GO:0006120">
    <property type="term" value="P:mitochondrial electron transport, NADH to ubiquinone"/>
    <property type="evidence" value="ECO:0000250"/>
    <property type="project" value="UniProtKB"/>
</dbReference>
<dbReference type="GO" id="GO:0032981">
    <property type="term" value="P:mitochondrial respiratory chain complex I assembly"/>
    <property type="evidence" value="ECO:0000250"/>
    <property type="project" value="UniProtKB"/>
</dbReference>
<dbReference type="InterPro" id="IPR000260">
    <property type="entry name" value="NADH4_N"/>
</dbReference>
<dbReference type="InterPro" id="IPR010227">
    <property type="entry name" value="NADH_Q_OxRdtase_chainM/4"/>
</dbReference>
<dbReference type="InterPro" id="IPR003918">
    <property type="entry name" value="NADH_UbQ_OxRdtase"/>
</dbReference>
<dbReference type="InterPro" id="IPR001750">
    <property type="entry name" value="ND/Mrp_TM"/>
</dbReference>
<dbReference type="NCBIfam" id="TIGR01972">
    <property type="entry name" value="NDH_I_M"/>
    <property type="match status" value="1"/>
</dbReference>
<dbReference type="PANTHER" id="PTHR43507">
    <property type="entry name" value="NADH-UBIQUINONE OXIDOREDUCTASE CHAIN 4"/>
    <property type="match status" value="1"/>
</dbReference>
<dbReference type="PANTHER" id="PTHR43507:SF20">
    <property type="entry name" value="NADH-UBIQUINONE OXIDOREDUCTASE CHAIN 4"/>
    <property type="match status" value="1"/>
</dbReference>
<dbReference type="Pfam" id="PF01059">
    <property type="entry name" value="Oxidored_q5_N"/>
    <property type="match status" value="1"/>
</dbReference>
<dbReference type="Pfam" id="PF00361">
    <property type="entry name" value="Proton_antipo_M"/>
    <property type="match status" value="1"/>
</dbReference>
<dbReference type="PRINTS" id="PR01437">
    <property type="entry name" value="NUOXDRDTASE4"/>
</dbReference>
<evidence type="ECO:0000250" key="1">
    <source>
        <dbReference type="UniProtKB" id="P03905"/>
    </source>
</evidence>
<evidence type="ECO:0000250" key="2">
    <source>
        <dbReference type="UniProtKB" id="P03910"/>
    </source>
</evidence>
<evidence type="ECO:0000255" key="3"/>
<evidence type="ECO:0000305" key="4"/>
<keyword id="KW-0249">Electron transport</keyword>
<keyword id="KW-0472">Membrane</keyword>
<keyword id="KW-0496">Mitochondrion</keyword>
<keyword id="KW-0999">Mitochondrion inner membrane</keyword>
<keyword id="KW-0520">NAD</keyword>
<keyword id="KW-0679">Respiratory chain</keyword>
<keyword id="KW-1278">Translocase</keyword>
<keyword id="KW-0812">Transmembrane</keyword>
<keyword id="KW-1133">Transmembrane helix</keyword>
<keyword id="KW-0813">Transport</keyword>
<keyword id="KW-0830">Ubiquinone</keyword>
<protein>
    <recommendedName>
        <fullName>NADH-ubiquinone oxidoreductase chain 4</fullName>
        <ecNumber evidence="1">7.1.1.2</ecNumber>
    </recommendedName>
    <alternativeName>
        <fullName>NADH dehydrogenase subunit 4</fullName>
    </alternativeName>
</protein>
<proteinExistence type="inferred from homology"/>
<geneLocation type="mitochondrion"/>
<organism>
    <name type="scientific">Balaenoptera physalus</name>
    <name type="common">Fin whale</name>
    <name type="synonym">Balaena physalus</name>
    <dbReference type="NCBI Taxonomy" id="9770"/>
    <lineage>
        <taxon>Eukaryota</taxon>
        <taxon>Metazoa</taxon>
        <taxon>Chordata</taxon>
        <taxon>Craniata</taxon>
        <taxon>Vertebrata</taxon>
        <taxon>Euteleostomi</taxon>
        <taxon>Mammalia</taxon>
        <taxon>Eutheria</taxon>
        <taxon>Laurasiatheria</taxon>
        <taxon>Artiodactyla</taxon>
        <taxon>Whippomorpha</taxon>
        <taxon>Cetacea</taxon>
        <taxon>Mysticeti</taxon>
        <taxon>Balaenopteridae</taxon>
        <taxon>Balaenoptera</taxon>
    </lineage>
</organism>
<gene>
    <name type="primary">MT-ND4</name>
    <name type="synonym">MTND4</name>
    <name type="synonym">NADH4</name>
    <name type="synonym">ND4</name>
</gene>
<comment type="function">
    <text evidence="1">Core subunit of the mitochondrial membrane respiratory chain NADH dehydrogenase (Complex I) which catalyzes electron transfer from NADH through the respiratory chain, using ubiquinone as an electron acceptor. Essential for the catalytic activity and assembly of complex I.</text>
</comment>
<comment type="catalytic activity">
    <reaction evidence="1">
        <text>a ubiquinone + NADH + 5 H(+)(in) = a ubiquinol + NAD(+) + 4 H(+)(out)</text>
        <dbReference type="Rhea" id="RHEA:29091"/>
        <dbReference type="Rhea" id="RHEA-COMP:9565"/>
        <dbReference type="Rhea" id="RHEA-COMP:9566"/>
        <dbReference type="ChEBI" id="CHEBI:15378"/>
        <dbReference type="ChEBI" id="CHEBI:16389"/>
        <dbReference type="ChEBI" id="CHEBI:17976"/>
        <dbReference type="ChEBI" id="CHEBI:57540"/>
        <dbReference type="ChEBI" id="CHEBI:57945"/>
        <dbReference type="EC" id="7.1.1.2"/>
    </reaction>
</comment>
<comment type="subunit">
    <text evidence="2">Core subunit of respiratory chain NADH dehydrogenase (Complex I) which is composed of 45 different subunits.</text>
</comment>
<comment type="subcellular location">
    <subcellularLocation>
        <location evidence="2">Mitochondrion inner membrane</location>
        <topology evidence="3">Multi-pass membrane protein</topology>
    </subcellularLocation>
</comment>
<comment type="similarity">
    <text evidence="4">Belongs to the complex I subunit 4 family.</text>
</comment>
<sequence length="459" mass="51710">MLKFIIPTIMLMPLTWLSKNNLIWINSTAHSLLISFSSLLLLNQLNDNSLNYSLMFFSDPLSTPLLILTMWLLPLMLMASQSHLIKEPPVRKKLYITMLITLQALLIMTFTATELILFYIMFEATLIPTLIIITRWGNQTERLNAGLYFLFYTLVGSLPLLVALVYLQNTTGSLNFLLLQHWAQPLSTSWSNIFMWLACMMAFLVKMPLYGLYLWLPKAHVEAPIAGSMVLAAVLLKLGGYGMLRITSMLNPLTEHMAYPFLMLSLWGMIMTSSICLRQTDLKSLIAYSSVSHMALVIAAILIQTPWSYMGATALMIAHGLTSSMLFCLANSNYERIHSRTMILPGGLQVFLPLMASWWLLASLTNLALPPTINLIGELLVVMSVFSWSNPTILLMGTNIVITALYSLYMLIMTQRGKHTHHINNITPSFTREHALMALHIIPLLLLSLNPKIILGPLY</sequence>
<reference key="1">
    <citation type="journal article" date="1991" name="J. Mol. Evol.">
        <title>The complete nucleotide sequence of the mitochondrial DNA of the fin whale, Balaenoptera physalus.</title>
        <authorList>
            <person name="Arnason U."/>
            <person name="Gullberg A."/>
            <person name="Widegren B."/>
        </authorList>
    </citation>
    <scope>NUCLEOTIDE SEQUENCE [GENOMIC DNA]</scope>
    <source>
        <strain>Isolate No. 27 / Anno 1987</strain>
        <tissue>Liver</tissue>
    </source>
</reference>
<feature type="chain" id="PRO_0000117900" description="NADH-ubiquinone oxidoreductase chain 4">
    <location>
        <begin position="1"/>
        <end position="459"/>
    </location>
</feature>
<feature type="transmembrane region" description="Helical" evidence="3">
    <location>
        <begin position="22"/>
        <end position="42"/>
    </location>
</feature>
<feature type="transmembrane region" description="Helical" evidence="3">
    <location>
        <begin position="60"/>
        <end position="80"/>
    </location>
</feature>
<feature type="transmembrane region" description="Helical" evidence="3">
    <location>
        <begin position="92"/>
        <end position="112"/>
    </location>
</feature>
<feature type="transmembrane region" description="Helical" evidence="3">
    <location>
        <begin position="113"/>
        <end position="133"/>
    </location>
</feature>
<feature type="transmembrane region" description="Helical" evidence="3">
    <location>
        <begin position="147"/>
        <end position="167"/>
    </location>
</feature>
<feature type="transmembrane region" description="Helical" evidence="3">
    <location>
        <begin position="193"/>
        <end position="213"/>
    </location>
</feature>
<feature type="transmembrane region" description="Helical" evidence="3">
    <location>
        <begin position="224"/>
        <end position="244"/>
    </location>
</feature>
<feature type="transmembrane region" description="Helical" evidence="3">
    <location>
        <begin position="257"/>
        <end position="277"/>
    </location>
</feature>
<feature type="transmembrane region" description="Helical" evidence="3">
    <location>
        <begin position="284"/>
        <end position="303"/>
    </location>
</feature>
<feature type="transmembrane region" description="Helical" evidence="3">
    <location>
        <begin position="308"/>
        <end position="330"/>
    </location>
</feature>
<feature type="transmembrane region" description="Helical" evidence="3">
    <location>
        <begin position="342"/>
        <end position="362"/>
    </location>
</feature>
<feature type="transmembrane region" description="Helical" evidence="3">
    <location>
        <begin position="393"/>
        <end position="413"/>
    </location>
</feature>
<feature type="transmembrane region" description="Helical" evidence="3">
    <location>
        <begin position="435"/>
        <end position="455"/>
    </location>
</feature>
<name>NU4M_BALPH</name>
<accession>P24975</accession>